<dbReference type="EC" id="3.4.25.1" evidence="1"/>
<dbReference type="EMBL" id="CP000660">
    <property type="protein sequence ID" value="ABP49672.1"/>
    <property type="molecule type" value="Genomic_DNA"/>
</dbReference>
<dbReference type="RefSeq" id="WP_011899580.1">
    <property type="nucleotide sequence ID" value="NC_009376.1"/>
</dbReference>
<dbReference type="SMR" id="A4WH05"/>
<dbReference type="STRING" id="340102.Pars_0055"/>
<dbReference type="MEROPS" id="T01.002"/>
<dbReference type="GeneID" id="5054488"/>
<dbReference type="KEGG" id="pas:Pars_0055"/>
<dbReference type="HOGENOM" id="CLU_035750_7_2_2"/>
<dbReference type="OrthoDB" id="6330at2157"/>
<dbReference type="PhylomeDB" id="A4WH05"/>
<dbReference type="Proteomes" id="UP000001567">
    <property type="component" value="Chromosome"/>
</dbReference>
<dbReference type="GO" id="GO:0005737">
    <property type="term" value="C:cytoplasm"/>
    <property type="evidence" value="ECO:0007669"/>
    <property type="project" value="UniProtKB-SubCell"/>
</dbReference>
<dbReference type="GO" id="GO:0019774">
    <property type="term" value="C:proteasome core complex, beta-subunit complex"/>
    <property type="evidence" value="ECO:0007669"/>
    <property type="project" value="UniProtKB-UniRule"/>
</dbReference>
<dbReference type="GO" id="GO:0004298">
    <property type="term" value="F:threonine-type endopeptidase activity"/>
    <property type="evidence" value="ECO:0007669"/>
    <property type="project" value="UniProtKB-UniRule"/>
</dbReference>
<dbReference type="GO" id="GO:0010498">
    <property type="term" value="P:proteasomal protein catabolic process"/>
    <property type="evidence" value="ECO:0007669"/>
    <property type="project" value="UniProtKB-UniRule"/>
</dbReference>
<dbReference type="FunFam" id="3.60.20.10:FF:000049">
    <property type="entry name" value="Proteasome subunit beta"/>
    <property type="match status" value="1"/>
</dbReference>
<dbReference type="Gene3D" id="3.60.20.10">
    <property type="entry name" value="Glutamine Phosphoribosylpyrophosphate, subunit 1, domain 1"/>
    <property type="match status" value="1"/>
</dbReference>
<dbReference type="HAMAP" id="MF_02113_A">
    <property type="entry name" value="Proteasome_B_A"/>
    <property type="match status" value="1"/>
</dbReference>
<dbReference type="InterPro" id="IPR029055">
    <property type="entry name" value="Ntn_hydrolases_N"/>
</dbReference>
<dbReference type="InterPro" id="IPR019983">
    <property type="entry name" value="Pept_T1A_Psome_bsu_arc"/>
</dbReference>
<dbReference type="InterPro" id="IPR000243">
    <property type="entry name" value="Pept_T1A_subB"/>
</dbReference>
<dbReference type="InterPro" id="IPR016050">
    <property type="entry name" value="Proteasome_bsu_CS"/>
</dbReference>
<dbReference type="InterPro" id="IPR001353">
    <property type="entry name" value="Proteasome_sua/b"/>
</dbReference>
<dbReference type="InterPro" id="IPR023333">
    <property type="entry name" value="Proteasome_suB-type"/>
</dbReference>
<dbReference type="PANTHER" id="PTHR32194:SF0">
    <property type="entry name" value="ATP-DEPENDENT PROTEASE SUBUNIT HSLV"/>
    <property type="match status" value="1"/>
</dbReference>
<dbReference type="PANTHER" id="PTHR32194">
    <property type="entry name" value="METALLOPROTEASE TLDD"/>
    <property type="match status" value="1"/>
</dbReference>
<dbReference type="Pfam" id="PF00227">
    <property type="entry name" value="Proteasome"/>
    <property type="match status" value="1"/>
</dbReference>
<dbReference type="PRINTS" id="PR00141">
    <property type="entry name" value="PROTEASOME"/>
</dbReference>
<dbReference type="SUPFAM" id="SSF56235">
    <property type="entry name" value="N-terminal nucleophile aminohydrolases (Ntn hydrolases)"/>
    <property type="match status" value="1"/>
</dbReference>
<dbReference type="PROSITE" id="PS00854">
    <property type="entry name" value="PROTEASOME_BETA_1"/>
    <property type="match status" value="1"/>
</dbReference>
<dbReference type="PROSITE" id="PS51476">
    <property type="entry name" value="PROTEASOME_BETA_2"/>
    <property type="match status" value="1"/>
</dbReference>
<reference key="1">
    <citation type="submission" date="2007-04" db="EMBL/GenBank/DDBJ databases">
        <title>Complete sequence of Pyrobaculum arsenaticum DSM 13514.</title>
        <authorList>
            <consortium name="US DOE Joint Genome Institute"/>
            <person name="Copeland A."/>
            <person name="Lucas S."/>
            <person name="Lapidus A."/>
            <person name="Barry K."/>
            <person name="Glavina del Rio T."/>
            <person name="Dalin E."/>
            <person name="Tice H."/>
            <person name="Pitluck S."/>
            <person name="Chain P."/>
            <person name="Malfatti S."/>
            <person name="Shin M."/>
            <person name="Vergez L."/>
            <person name="Schmutz J."/>
            <person name="Larimer F."/>
            <person name="Land M."/>
            <person name="Hauser L."/>
            <person name="Kyrpides N."/>
            <person name="Mikhailova N."/>
            <person name="Cozen A.E."/>
            <person name="Fitz-Gibbon S.T."/>
            <person name="House C.H."/>
            <person name="Saltikov C."/>
            <person name="Lowe T.M."/>
            <person name="Richardson P."/>
        </authorList>
    </citation>
    <scope>NUCLEOTIDE SEQUENCE [LARGE SCALE GENOMIC DNA]</scope>
    <source>
        <strain>ATCC 700994 / DSM 13514 / JCM 11321 / PZ6</strain>
    </source>
</reference>
<sequence length="202" mass="22277">MTTTVGIVVKDGVVLATDKRVTAGYYIAHKKGEKLWKIDDHVAATMSGGVADLQNILSFLTVRAREYKTQFRRPIPIRALVNYMSLILFYSRPYVYVVHSIIGGVDEEEGAVMYMVDWLGTVTKEKYVATGSGSPYAKGVLEVGYRGDLTVEEAVDLAINAIKAAIRNDPGSGEGIDVVTITKRDGFKRIFTTQQKLLIPEI</sequence>
<accession>A4WH05</accession>
<protein>
    <recommendedName>
        <fullName evidence="1">Proteasome subunit beta 1</fullName>
        <ecNumber evidence="1">3.4.25.1</ecNumber>
    </recommendedName>
    <alternativeName>
        <fullName evidence="1">20S proteasome beta subunit 1</fullName>
    </alternativeName>
    <alternativeName>
        <fullName evidence="1">Proteasome core protein PsmB 1</fullName>
    </alternativeName>
</protein>
<keyword id="KW-0068">Autocatalytic cleavage</keyword>
<keyword id="KW-0963">Cytoplasm</keyword>
<keyword id="KW-0378">Hydrolase</keyword>
<keyword id="KW-0645">Protease</keyword>
<keyword id="KW-0647">Proteasome</keyword>
<keyword id="KW-0888">Threonine protease</keyword>
<keyword id="KW-0865">Zymogen</keyword>
<gene>
    <name evidence="1" type="primary">psmB1</name>
    <name type="ordered locus">Pars_0055</name>
</gene>
<organism>
    <name type="scientific">Pyrobaculum arsenaticum (strain DSM 13514 / JCM 11321 / PZ6)</name>
    <dbReference type="NCBI Taxonomy" id="340102"/>
    <lineage>
        <taxon>Archaea</taxon>
        <taxon>Thermoproteota</taxon>
        <taxon>Thermoprotei</taxon>
        <taxon>Thermoproteales</taxon>
        <taxon>Thermoproteaceae</taxon>
        <taxon>Pyrobaculum</taxon>
    </lineage>
</organism>
<name>PSB1_PYRAR</name>
<comment type="function">
    <text evidence="1">Component of the proteasome core, a large protease complex with broad specificity involved in protein degradation.</text>
</comment>
<comment type="catalytic activity">
    <reaction evidence="1">
        <text>Cleavage of peptide bonds with very broad specificity.</text>
        <dbReference type="EC" id="3.4.25.1"/>
    </reaction>
</comment>
<comment type="activity regulation">
    <text evidence="1">The formation of the proteasomal ATPase PAN-20S proteasome complex, via the docking of the C-termini of PAN into the intersubunit pockets in the alpha-rings, triggers opening of the gate for substrate entry. Interconversion between the open-gate and close-gate conformations leads to a dynamic regulation of the 20S proteasome proteolysis activity.</text>
</comment>
<comment type="subunit">
    <text evidence="1">The 20S proteasome core is composed of 14 alpha and 14 beta subunits that assemble into four stacked heptameric rings, resulting in a barrel-shaped structure. The two inner rings, each composed of seven catalytic beta subunits, are sandwiched by two outer rings, each composed of seven alpha subunits. The catalytic chamber with the active sites is on the inside of the barrel. Has a gated structure, the ends of the cylinder being occluded by the N-termini of the alpha-subunits. Is capped at one or both ends by the proteasome regulatory ATPase, PAN.</text>
</comment>
<comment type="subcellular location">
    <subcellularLocation>
        <location evidence="1">Cytoplasm</location>
    </subcellularLocation>
</comment>
<comment type="similarity">
    <text evidence="1">Belongs to the peptidase T1B family.</text>
</comment>
<feature type="propeptide" id="PRO_0000397396" description="Removed in mature form; by autocatalysis" evidence="1">
    <location>
        <position position="1"/>
    </location>
</feature>
<feature type="chain" id="PRO_0000397397" description="Proteasome subunit beta 1">
    <location>
        <begin position="2"/>
        <end position="202"/>
    </location>
</feature>
<feature type="active site" description="Nucleophile" evidence="1">
    <location>
        <position position="2"/>
    </location>
</feature>
<evidence type="ECO:0000255" key="1">
    <source>
        <dbReference type="HAMAP-Rule" id="MF_02113"/>
    </source>
</evidence>
<proteinExistence type="inferred from homology"/>